<sequence length="445" mass="49226">MKIFGTDGVRGKAGVKLTPMFVMRLGVAAGLYFKKHSKTNKILIGKDTRKSGYMVENALVSALTSIGYNVIQIGPMPTPAIAFLTEDMRCDAGIMISASHNPFEDNGIKFFNSYGYKLKEEEERAIEEIFHDERLLHSSYKVGESIGSAKRIDDVIGRYIVHLKHSFPKHLNLQSLRIVLDTANGAAYKVAPVVFSELGADVLVINDEPNGCNINEQCGALHPNQLSQEVKKYRADLGFAFDGDADRLVVVDNLGNIVHGDKLLGVLGVYQKSKNALSSQAIVATSMSNLALKEYLKSQDLELKHCAIGDKFVSECMRLNKANFGGEQSGHIIFSDYAKTGDGLVCALQVSALVLESKQVSSVALNPFELYPQNLVNLNVQKKPPLESLKGYSALLKELDQLEIRHLIRYSGTENKLRILLEAKDEKLLESKMQELKEFFEGHLC</sequence>
<organism>
    <name type="scientific">Helicobacter pylori (strain P12)</name>
    <dbReference type="NCBI Taxonomy" id="570508"/>
    <lineage>
        <taxon>Bacteria</taxon>
        <taxon>Pseudomonadati</taxon>
        <taxon>Campylobacterota</taxon>
        <taxon>Epsilonproteobacteria</taxon>
        <taxon>Campylobacterales</taxon>
        <taxon>Helicobacteraceae</taxon>
        <taxon>Helicobacter</taxon>
    </lineage>
</organism>
<reference key="1">
    <citation type="submission" date="2008-10" db="EMBL/GenBank/DDBJ databases">
        <title>The complete genome sequence of Helicobacter pylori strain P12.</title>
        <authorList>
            <person name="Fischer W."/>
            <person name="Windhager L."/>
            <person name="Karnholz A."/>
            <person name="Zeiller M."/>
            <person name="Zimmer R."/>
            <person name="Haas R."/>
        </authorList>
    </citation>
    <scope>NUCLEOTIDE SEQUENCE [LARGE SCALE GENOMIC DNA]</scope>
    <source>
        <strain>P12</strain>
    </source>
</reference>
<feature type="chain" id="PRO_1000201107" description="Phosphoglucosamine mutase">
    <location>
        <begin position="1"/>
        <end position="445"/>
    </location>
</feature>
<feature type="active site" description="Phosphoserine intermediate" evidence="1">
    <location>
        <position position="99"/>
    </location>
</feature>
<feature type="binding site" description="via phosphate group" evidence="1">
    <location>
        <position position="99"/>
    </location>
    <ligand>
        <name>Mg(2+)</name>
        <dbReference type="ChEBI" id="CHEBI:18420"/>
    </ligand>
</feature>
<feature type="binding site" evidence="1">
    <location>
        <position position="242"/>
    </location>
    <ligand>
        <name>Mg(2+)</name>
        <dbReference type="ChEBI" id="CHEBI:18420"/>
    </ligand>
</feature>
<feature type="binding site" evidence="1">
    <location>
        <position position="244"/>
    </location>
    <ligand>
        <name>Mg(2+)</name>
        <dbReference type="ChEBI" id="CHEBI:18420"/>
    </ligand>
</feature>
<feature type="binding site" evidence="1">
    <location>
        <position position="246"/>
    </location>
    <ligand>
        <name>Mg(2+)</name>
        <dbReference type="ChEBI" id="CHEBI:18420"/>
    </ligand>
</feature>
<feature type="modified residue" description="Phosphoserine" evidence="1">
    <location>
        <position position="99"/>
    </location>
</feature>
<name>GLMM_HELP2</name>
<keyword id="KW-0413">Isomerase</keyword>
<keyword id="KW-0460">Magnesium</keyword>
<keyword id="KW-0479">Metal-binding</keyword>
<keyword id="KW-0597">Phosphoprotein</keyword>
<accession>B6JPH8</accession>
<protein>
    <recommendedName>
        <fullName evidence="1">Phosphoglucosamine mutase</fullName>
        <ecNumber evidence="1">5.4.2.10</ecNumber>
    </recommendedName>
</protein>
<gene>
    <name evidence="1" type="primary">glmM</name>
    <name type="ordered locus">HPP12_0079</name>
</gene>
<proteinExistence type="inferred from homology"/>
<dbReference type="EC" id="5.4.2.10" evidence="1"/>
<dbReference type="EMBL" id="CP001217">
    <property type="protein sequence ID" value="ACJ07239.1"/>
    <property type="molecule type" value="Genomic_DNA"/>
</dbReference>
<dbReference type="SMR" id="B6JPH8"/>
<dbReference type="KEGG" id="hpp:HPP12_0079"/>
<dbReference type="HOGENOM" id="CLU_016950_7_0_7"/>
<dbReference type="Proteomes" id="UP000008198">
    <property type="component" value="Chromosome"/>
</dbReference>
<dbReference type="GO" id="GO:0005829">
    <property type="term" value="C:cytosol"/>
    <property type="evidence" value="ECO:0007669"/>
    <property type="project" value="TreeGrafter"/>
</dbReference>
<dbReference type="GO" id="GO:0000287">
    <property type="term" value="F:magnesium ion binding"/>
    <property type="evidence" value="ECO:0007669"/>
    <property type="project" value="UniProtKB-UniRule"/>
</dbReference>
<dbReference type="GO" id="GO:0008966">
    <property type="term" value="F:phosphoglucosamine mutase activity"/>
    <property type="evidence" value="ECO:0007669"/>
    <property type="project" value="UniProtKB-UniRule"/>
</dbReference>
<dbReference type="GO" id="GO:0004615">
    <property type="term" value="F:phosphomannomutase activity"/>
    <property type="evidence" value="ECO:0007669"/>
    <property type="project" value="TreeGrafter"/>
</dbReference>
<dbReference type="GO" id="GO:0005975">
    <property type="term" value="P:carbohydrate metabolic process"/>
    <property type="evidence" value="ECO:0007669"/>
    <property type="project" value="InterPro"/>
</dbReference>
<dbReference type="GO" id="GO:0009252">
    <property type="term" value="P:peptidoglycan biosynthetic process"/>
    <property type="evidence" value="ECO:0007669"/>
    <property type="project" value="TreeGrafter"/>
</dbReference>
<dbReference type="GO" id="GO:0006048">
    <property type="term" value="P:UDP-N-acetylglucosamine biosynthetic process"/>
    <property type="evidence" value="ECO:0007669"/>
    <property type="project" value="TreeGrafter"/>
</dbReference>
<dbReference type="CDD" id="cd05802">
    <property type="entry name" value="GlmM"/>
    <property type="match status" value="1"/>
</dbReference>
<dbReference type="FunFam" id="3.30.310.50:FF:000013">
    <property type="entry name" value="Phosphoglucosamine mutase"/>
    <property type="match status" value="1"/>
</dbReference>
<dbReference type="FunFam" id="3.40.120.10:FF:000001">
    <property type="entry name" value="Phosphoglucosamine mutase"/>
    <property type="match status" value="1"/>
</dbReference>
<dbReference type="FunFam" id="3.40.120.10:FF:000003">
    <property type="entry name" value="Phosphoglucosamine mutase"/>
    <property type="match status" value="1"/>
</dbReference>
<dbReference type="Gene3D" id="3.40.120.10">
    <property type="entry name" value="Alpha-D-Glucose-1,6-Bisphosphate, subunit A, domain 3"/>
    <property type="match status" value="3"/>
</dbReference>
<dbReference type="Gene3D" id="3.30.310.50">
    <property type="entry name" value="Alpha-D-phosphohexomutase, C-terminal domain"/>
    <property type="match status" value="1"/>
</dbReference>
<dbReference type="HAMAP" id="MF_01554_B">
    <property type="entry name" value="GlmM_B"/>
    <property type="match status" value="1"/>
</dbReference>
<dbReference type="InterPro" id="IPR005844">
    <property type="entry name" value="A-D-PHexomutase_a/b/a-I"/>
</dbReference>
<dbReference type="InterPro" id="IPR016055">
    <property type="entry name" value="A-D-PHexomutase_a/b/a-I/II/III"/>
</dbReference>
<dbReference type="InterPro" id="IPR005845">
    <property type="entry name" value="A-D-PHexomutase_a/b/a-II"/>
</dbReference>
<dbReference type="InterPro" id="IPR005846">
    <property type="entry name" value="A-D-PHexomutase_a/b/a-III"/>
</dbReference>
<dbReference type="InterPro" id="IPR005843">
    <property type="entry name" value="A-D-PHexomutase_C"/>
</dbReference>
<dbReference type="InterPro" id="IPR036900">
    <property type="entry name" value="A-D-PHexomutase_C_sf"/>
</dbReference>
<dbReference type="InterPro" id="IPR016066">
    <property type="entry name" value="A-D-PHexomutase_CS"/>
</dbReference>
<dbReference type="InterPro" id="IPR005841">
    <property type="entry name" value="Alpha-D-phosphohexomutase_SF"/>
</dbReference>
<dbReference type="InterPro" id="IPR006352">
    <property type="entry name" value="GlmM_bact"/>
</dbReference>
<dbReference type="InterPro" id="IPR050060">
    <property type="entry name" value="Phosphoglucosamine_mutase"/>
</dbReference>
<dbReference type="NCBIfam" id="TIGR01455">
    <property type="entry name" value="glmM"/>
    <property type="match status" value="1"/>
</dbReference>
<dbReference type="PANTHER" id="PTHR42946:SF1">
    <property type="entry name" value="PHOSPHOGLUCOMUTASE (ALPHA-D-GLUCOSE-1,6-BISPHOSPHATE-DEPENDENT)"/>
    <property type="match status" value="1"/>
</dbReference>
<dbReference type="PANTHER" id="PTHR42946">
    <property type="entry name" value="PHOSPHOHEXOSE MUTASE"/>
    <property type="match status" value="1"/>
</dbReference>
<dbReference type="Pfam" id="PF02878">
    <property type="entry name" value="PGM_PMM_I"/>
    <property type="match status" value="1"/>
</dbReference>
<dbReference type="Pfam" id="PF02879">
    <property type="entry name" value="PGM_PMM_II"/>
    <property type="match status" value="1"/>
</dbReference>
<dbReference type="Pfam" id="PF02880">
    <property type="entry name" value="PGM_PMM_III"/>
    <property type="match status" value="1"/>
</dbReference>
<dbReference type="Pfam" id="PF00408">
    <property type="entry name" value="PGM_PMM_IV"/>
    <property type="match status" value="1"/>
</dbReference>
<dbReference type="PRINTS" id="PR00509">
    <property type="entry name" value="PGMPMM"/>
</dbReference>
<dbReference type="SUPFAM" id="SSF55957">
    <property type="entry name" value="Phosphoglucomutase, C-terminal domain"/>
    <property type="match status" value="1"/>
</dbReference>
<dbReference type="SUPFAM" id="SSF53738">
    <property type="entry name" value="Phosphoglucomutase, first 3 domains"/>
    <property type="match status" value="3"/>
</dbReference>
<dbReference type="PROSITE" id="PS00710">
    <property type="entry name" value="PGM_PMM"/>
    <property type="match status" value="1"/>
</dbReference>
<evidence type="ECO:0000255" key="1">
    <source>
        <dbReference type="HAMAP-Rule" id="MF_01554"/>
    </source>
</evidence>
<comment type="function">
    <text evidence="1">Catalyzes the conversion of glucosamine-6-phosphate to glucosamine-1-phosphate.</text>
</comment>
<comment type="catalytic activity">
    <reaction evidence="1">
        <text>alpha-D-glucosamine 1-phosphate = D-glucosamine 6-phosphate</text>
        <dbReference type="Rhea" id="RHEA:23424"/>
        <dbReference type="ChEBI" id="CHEBI:58516"/>
        <dbReference type="ChEBI" id="CHEBI:58725"/>
        <dbReference type="EC" id="5.4.2.10"/>
    </reaction>
</comment>
<comment type="cofactor">
    <cofactor evidence="1">
        <name>Mg(2+)</name>
        <dbReference type="ChEBI" id="CHEBI:18420"/>
    </cofactor>
    <text evidence="1">Binds 1 Mg(2+) ion per subunit.</text>
</comment>
<comment type="PTM">
    <text evidence="1">Activated by phosphorylation.</text>
</comment>
<comment type="similarity">
    <text evidence="1">Belongs to the phosphohexose mutase family.</text>
</comment>